<protein>
    <recommendedName>
        <fullName evidence="1">Nucleoside triphosphate pyrophosphatase</fullName>
        <ecNumber evidence="1">3.6.1.9</ecNumber>
    </recommendedName>
    <alternativeName>
        <fullName evidence="1">Nucleotide pyrophosphatase</fullName>
        <shortName evidence="1">Nucleotide PPase</shortName>
    </alternativeName>
</protein>
<name>NTPP_CORGB</name>
<gene>
    <name type="ordered locus">cgR_0825</name>
</gene>
<proteinExistence type="inferred from homology"/>
<accession>A4QC50</accession>
<evidence type="ECO:0000255" key="1">
    <source>
        <dbReference type="HAMAP-Rule" id="MF_00528"/>
    </source>
</evidence>
<organism>
    <name type="scientific">Corynebacterium glutamicum (strain R)</name>
    <dbReference type="NCBI Taxonomy" id="340322"/>
    <lineage>
        <taxon>Bacteria</taxon>
        <taxon>Bacillati</taxon>
        <taxon>Actinomycetota</taxon>
        <taxon>Actinomycetes</taxon>
        <taxon>Mycobacteriales</taxon>
        <taxon>Corynebacteriaceae</taxon>
        <taxon>Corynebacterium</taxon>
    </lineage>
</organism>
<feature type="chain" id="PRO_1000060939" description="Nucleoside triphosphate pyrophosphatase">
    <location>
        <begin position="1"/>
        <end position="197"/>
    </location>
</feature>
<feature type="active site" description="Proton acceptor" evidence="1">
    <location>
        <position position="72"/>
    </location>
</feature>
<sequence length="197" mass="21220">MQIVLASQSPSRRKILNSAGVEPLIHPADVDEDALLHSLNGSAPEEIVRQLALAKAQVVAPSYPGDVVIGGDSMLLIDATLQGKPHTREATIERWKQQRGNKATLITGHAIIFGDEVIVESSSTNIHFAEASDVDIERYADSGEPLECAGAFTLEALGGWFIDSIEGDPSSVIGLSLPVVRRALYRLGFNASDFWNM</sequence>
<comment type="function">
    <text evidence="1">Nucleoside triphosphate pyrophosphatase. May have a dual role in cell division arrest and in preventing the incorporation of modified nucleotides into cellular nucleic acids.</text>
</comment>
<comment type="catalytic activity">
    <reaction evidence="1">
        <text>a ribonucleoside 5'-triphosphate + H2O = a ribonucleoside 5'-phosphate + diphosphate + H(+)</text>
        <dbReference type="Rhea" id="RHEA:23996"/>
        <dbReference type="ChEBI" id="CHEBI:15377"/>
        <dbReference type="ChEBI" id="CHEBI:15378"/>
        <dbReference type="ChEBI" id="CHEBI:33019"/>
        <dbReference type="ChEBI" id="CHEBI:58043"/>
        <dbReference type="ChEBI" id="CHEBI:61557"/>
        <dbReference type="EC" id="3.6.1.9"/>
    </reaction>
</comment>
<comment type="catalytic activity">
    <reaction evidence="1">
        <text>a 2'-deoxyribonucleoside 5'-triphosphate + H2O = a 2'-deoxyribonucleoside 5'-phosphate + diphosphate + H(+)</text>
        <dbReference type="Rhea" id="RHEA:44644"/>
        <dbReference type="ChEBI" id="CHEBI:15377"/>
        <dbReference type="ChEBI" id="CHEBI:15378"/>
        <dbReference type="ChEBI" id="CHEBI:33019"/>
        <dbReference type="ChEBI" id="CHEBI:61560"/>
        <dbReference type="ChEBI" id="CHEBI:65317"/>
        <dbReference type="EC" id="3.6.1.9"/>
    </reaction>
</comment>
<comment type="cofactor">
    <cofactor evidence="1">
        <name>a divalent metal cation</name>
        <dbReference type="ChEBI" id="CHEBI:60240"/>
    </cofactor>
</comment>
<comment type="subcellular location">
    <subcellularLocation>
        <location evidence="1">Cytoplasm</location>
    </subcellularLocation>
</comment>
<comment type="similarity">
    <text evidence="1">Belongs to the Maf family.</text>
</comment>
<keyword id="KW-0963">Cytoplasm</keyword>
<keyword id="KW-0378">Hydrolase</keyword>
<keyword id="KW-0546">Nucleotide metabolism</keyword>
<reference key="1">
    <citation type="journal article" date="2007" name="Microbiology">
        <title>Comparative analysis of the Corynebacterium glutamicum group and complete genome sequence of strain R.</title>
        <authorList>
            <person name="Yukawa H."/>
            <person name="Omumasaba C.A."/>
            <person name="Nonaka H."/>
            <person name="Kos P."/>
            <person name="Okai N."/>
            <person name="Suzuki N."/>
            <person name="Suda M."/>
            <person name="Tsuge Y."/>
            <person name="Watanabe J."/>
            <person name="Ikeda Y."/>
            <person name="Vertes A.A."/>
            <person name="Inui M."/>
        </authorList>
    </citation>
    <scope>NUCLEOTIDE SEQUENCE [LARGE SCALE GENOMIC DNA]</scope>
    <source>
        <strain>R</strain>
    </source>
</reference>
<dbReference type="EC" id="3.6.1.9" evidence="1"/>
<dbReference type="EMBL" id="AP009044">
    <property type="protein sequence ID" value="BAF53797.1"/>
    <property type="molecule type" value="Genomic_DNA"/>
</dbReference>
<dbReference type="RefSeq" id="WP_003858264.1">
    <property type="nucleotide sequence ID" value="NC_009342.1"/>
</dbReference>
<dbReference type="SMR" id="A4QC50"/>
<dbReference type="KEGG" id="cgt:cgR_0825"/>
<dbReference type="HOGENOM" id="CLU_040416_1_2_11"/>
<dbReference type="PhylomeDB" id="A4QC50"/>
<dbReference type="Proteomes" id="UP000006698">
    <property type="component" value="Chromosome"/>
</dbReference>
<dbReference type="GO" id="GO:0005737">
    <property type="term" value="C:cytoplasm"/>
    <property type="evidence" value="ECO:0007669"/>
    <property type="project" value="UniProtKB-SubCell"/>
</dbReference>
<dbReference type="GO" id="GO:0047429">
    <property type="term" value="F:nucleoside triphosphate diphosphatase activity"/>
    <property type="evidence" value="ECO:0007669"/>
    <property type="project" value="UniProtKB-EC"/>
</dbReference>
<dbReference type="GO" id="GO:0009117">
    <property type="term" value="P:nucleotide metabolic process"/>
    <property type="evidence" value="ECO:0007669"/>
    <property type="project" value="UniProtKB-KW"/>
</dbReference>
<dbReference type="CDD" id="cd00555">
    <property type="entry name" value="Maf"/>
    <property type="match status" value="1"/>
</dbReference>
<dbReference type="Gene3D" id="3.90.950.10">
    <property type="match status" value="1"/>
</dbReference>
<dbReference type="HAMAP" id="MF_00528">
    <property type="entry name" value="Maf"/>
    <property type="match status" value="1"/>
</dbReference>
<dbReference type="InterPro" id="IPR029001">
    <property type="entry name" value="ITPase-like_fam"/>
</dbReference>
<dbReference type="InterPro" id="IPR003697">
    <property type="entry name" value="Maf-like"/>
</dbReference>
<dbReference type="NCBIfam" id="TIGR00172">
    <property type="entry name" value="maf"/>
    <property type="match status" value="1"/>
</dbReference>
<dbReference type="PANTHER" id="PTHR43213">
    <property type="entry name" value="BIFUNCTIONAL DTTP/UTP PYROPHOSPHATASE/METHYLTRANSFERASE PROTEIN-RELATED"/>
    <property type="match status" value="1"/>
</dbReference>
<dbReference type="PANTHER" id="PTHR43213:SF5">
    <property type="entry name" value="BIFUNCTIONAL DTTP_UTP PYROPHOSPHATASE_METHYLTRANSFERASE PROTEIN-RELATED"/>
    <property type="match status" value="1"/>
</dbReference>
<dbReference type="Pfam" id="PF02545">
    <property type="entry name" value="Maf"/>
    <property type="match status" value="1"/>
</dbReference>
<dbReference type="PIRSF" id="PIRSF006305">
    <property type="entry name" value="Maf"/>
    <property type="match status" value="1"/>
</dbReference>
<dbReference type="SUPFAM" id="SSF52972">
    <property type="entry name" value="ITPase-like"/>
    <property type="match status" value="1"/>
</dbReference>